<evidence type="ECO:0000255" key="1">
    <source>
        <dbReference type="HAMAP-Rule" id="MF_03100"/>
    </source>
</evidence>
<evidence type="ECO:0000256" key="2">
    <source>
        <dbReference type="SAM" id="MobiDB-lite"/>
    </source>
</evidence>
<proteinExistence type="inferred from homology"/>
<feature type="chain" id="PRO_0000383765" description="Structure-specific endonuclease subunit SLX1 homolog">
    <location>
        <begin position="1"/>
        <end position="420"/>
    </location>
</feature>
<feature type="domain" description="GIY-YIG" evidence="1">
    <location>
        <begin position="19"/>
        <end position="106"/>
    </location>
</feature>
<feature type="zinc finger region" description="SLX1-type" evidence="1">
    <location>
        <begin position="348"/>
        <end position="405"/>
    </location>
</feature>
<feature type="region of interest" description="Disordered" evidence="2">
    <location>
        <begin position="237"/>
        <end position="306"/>
    </location>
</feature>
<feature type="region of interest" description="Disordered" evidence="2">
    <location>
        <begin position="311"/>
        <end position="330"/>
    </location>
</feature>
<feature type="compositionally biased region" description="Low complexity" evidence="2">
    <location>
        <begin position="247"/>
        <end position="266"/>
    </location>
</feature>
<feature type="compositionally biased region" description="Basic and acidic residues" evidence="2">
    <location>
        <begin position="279"/>
        <end position="301"/>
    </location>
</feature>
<feature type="compositionally biased region" description="Acidic residues" evidence="2">
    <location>
        <begin position="311"/>
        <end position="327"/>
    </location>
</feature>
<reference key="1">
    <citation type="journal article" date="2008" name="Nature">
        <title>The genome of the choanoflagellate Monosiga brevicollis and the origin of metazoans.</title>
        <authorList>
            <consortium name="JGI Sequencing"/>
            <person name="King N."/>
            <person name="Westbrook M.J."/>
            <person name="Young S.L."/>
            <person name="Kuo A."/>
            <person name="Abedin M."/>
            <person name="Chapman J."/>
            <person name="Fairclough S."/>
            <person name="Hellsten U."/>
            <person name="Isogai Y."/>
            <person name="Letunic I."/>
            <person name="Marr M."/>
            <person name="Pincus D."/>
            <person name="Putnam N."/>
            <person name="Rokas A."/>
            <person name="Wright K.J."/>
            <person name="Zuzow R."/>
            <person name="Dirks W."/>
            <person name="Good M."/>
            <person name="Goodstein D."/>
            <person name="Lemons D."/>
            <person name="Li W."/>
            <person name="Lyons J.B."/>
            <person name="Morris A."/>
            <person name="Nichols S."/>
            <person name="Richter D.J."/>
            <person name="Salamov A."/>
            <person name="Bork P."/>
            <person name="Lim W.A."/>
            <person name="Manning G."/>
            <person name="Miller W.T."/>
            <person name="McGinnis W."/>
            <person name="Shapiro H."/>
            <person name="Tjian R."/>
            <person name="Grigoriev I.V."/>
            <person name="Rokhsar D."/>
        </authorList>
    </citation>
    <scope>NUCLEOTIDE SEQUENCE [LARGE SCALE GENOMIC DNA]</scope>
    <source>
        <strain>MX1 / ATCC 50154</strain>
    </source>
</reference>
<gene>
    <name type="ORF">8836</name>
</gene>
<dbReference type="EC" id="3.1.-.-" evidence="1"/>
<dbReference type="EMBL" id="CH991553">
    <property type="protein sequence ID" value="EDQ88769.1"/>
    <property type="molecule type" value="Genomic_DNA"/>
</dbReference>
<dbReference type="RefSeq" id="XP_001746382.1">
    <property type="nucleotide sequence ID" value="XM_001746330.1"/>
</dbReference>
<dbReference type="STRING" id="81824.A9V196"/>
<dbReference type="EnsemblProtists" id="EDQ88769">
    <property type="protein sequence ID" value="EDQ88769"/>
    <property type="gene ID" value="MONBRDRAFT_8836"/>
</dbReference>
<dbReference type="KEGG" id="mbr:MONBRDRAFT_8836"/>
<dbReference type="eggNOG" id="KOG3005">
    <property type="taxonomic scope" value="Eukaryota"/>
</dbReference>
<dbReference type="InParanoid" id="A9V196"/>
<dbReference type="Proteomes" id="UP000001357">
    <property type="component" value="Unassembled WGS sequence"/>
</dbReference>
<dbReference type="GO" id="GO:0033557">
    <property type="term" value="C:Slx1-Slx4 complex"/>
    <property type="evidence" value="ECO:0000318"/>
    <property type="project" value="GO_Central"/>
</dbReference>
<dbReference type="GO" id="GO:0017108">
    <property type="term" value="F:5'-flap endonuclease activity"/>
    <property type="evidence" value="ECO:0000318"/>
    <property type="project" value="GO_Central"/>
</dbReference>
<dbReference type="GO" id="GO:0008821">
    <property type="term" value="F:crossover junction DNA endonuclease activity"/>
    <property type="evidence" value="ECO:0000318"/>
    <property type="project" value="GO_Central"/>
</dbReference>
<dbReference type="GO" id="GO:0008270">
    <property type="term" value="F:zinc ion binding"/>
    <property type="evidence" value="ECO:0007669"/>
    <property type="project" value="UniProtKB-KW"/>
</dbReference>
<dbReference type="GO" id="GO:0000724">
    <property type="term" value="P:double-strand break repair via homologous recombination"/>
    <property type="evidence" value="ECO:0000318"/>
    <property type="project" value="GO_Central"/>
</dbReference>
<dbReference type="CDD" id="cd10455">
    <property type="entry name" value="GIY-YIG_SLX1"/>
    <property type="match status" value="1"/>
</dbReference>
<dbReference type="Gene3D" id="3.40.1440.10">
    <property type="entry name" value="GIY-YIG endonuclease"/>
    <property type="match status" value="1"/>
</dbReference>
<dbReference type="Gene3D" id="3.30.40.10">
    <property type="entry name" value="Zinc/RING finger domain, C3HC4 (zinc finger)"/>
    <property type="match status" value="1"/>
</dbReference>
<dbReference type="HAMAP" id="MF_03100">
    <property type="entry name" value="Endonuc_su_Slx1"/>
    <property type="match status" value="1"/>
</dbReference>
<dbReference type="InterPro" id="IPR000305">
    <property type="entry name" value="GIY-YIG_endonuc"/>
</dbReference>
<dbReference type="InterPro" id="IPR035901">
    <property type="entry name" value="GIY-YIG_endonuc_sf"/>
</dbReference>
<dbReference type="InterPro" id="IPR027520">
    <property type="entry name" value="Slx1"/>
</dbReference>
<dbReference type="InterPro" id="IPR048749">
    <property type="entry name" value="SLX1_C"/>
</dbReference>
<dbReference type="InterPro" id="IPR050381">
    <property type="entry name" value="SLX1_endonuclease"/>
</dbReference>
<dbReference type="InterPro" id="IPR013083">
    <property type="entry name" value="Znf_RING/FYVE/PHD"/>
</dbReference>
<dbReference type="PANTHER" id="PTHR20208">
    <property type="entry name" value="STRUCTURE-SPECIFIC ENDONUCLEASE SUBUNIT SLX1"/>
    <property type="match status" value="1"/>
</dbReference>
<dbReference type="PANTHER" id="PTHR20208:SF10">
    <property type="entry name" value="STRUCTURE-SPECIFIC ENDONUCLEASE SUBUNIT SLX1"/>
    <property type="match status" value="1"/>
</dbReference>
<dbReference type="Pfam" id="PF01541">
    <property type="entry name" value="GIY-YIG"/>
    <property type="match status" value="1"/>
</dbReference>
<dbReference type="Pfam" id="PF21202">
    <property type="entry name" value="SLX1_C"/>
    <property type="match status" value="1"/>
</dbReference>
<dbReference type="PROSITE" id="PS50164">
    <property type="entry name" value="GIY_YIG"/>
    <property type="match status" value="1"/>
</dbReference>
<protein>
    <recommendedName>
        <fullName evidence="1">Structure-specific endonuclease subunit SLX1 homolog</fullName>
        <ecNumber evidence="1">3.1.-.-</ecNumber>
    </recommendedName>
</protein>
<sequence length="420" mass="45633">MAGGYIARVNMKGHYLSWSSDNTYPWQNIQPTQNTKLLGLQDIGFTTDPVRRLRQHNSEIGGGAVRTTRAKGSWDMAAIVYGFPNKVAALRFEWAWQHPLKSRRLRDAVRSDLPASRAAQMQLTAKLHTLAAMLYTVPWSDQPLTLCWLQPDIADKWSNIWQRHCQCQSALPPFLTTRSGNLQDPLFQLNNAAAAASTIQRAALAADHHAWRLAAAAQAQAPDFFTGLGRLDLAAPSVEESGAGPHPSSCSVPPSTGSSAAPTPGALAPQPTKQNKFGVDPRLDSDDRDDNHQFESPDNHEAAAVNVDVVDDSADDGTTDGNEDGPDDVAPHQEVTARHVHGAIGETCGHCHQSVYQELCIVCLNATCTYRAHLLCAAQAAVHPLGQSSPSETRLVPLRHSCPRCAHQAHWASWIAEVTL</sequence>
<comment type="function">
    <text evidence="1">Catalytic subunit of a heterodimeric structure-specific endonuclease that resolves DNA secondary structures generated during DNA repair and recombination. Has endonuclease activity towards branched DNA substrates, introducing single-strand cuts in duplex DNA close to junctions with ss-DNA.</text>
</comment>
<comment type="cofactor">
    <cofactor evidence="1">
        <name>a divalent metal cation</name>
        <dbReference type="ChEBI" id="CHEBI:60240"/>
    </cofactor>
</comment>
<comment type="subunit">
    <text evidence="1">Forms a heterodimer with a member of the SLX4 family.</text>
</comment>
<comment type="subcellular location">
    <subcellularLocation>
        <location evidence="1">Nucleus</location>
    </subcellularLocation>
</comment>
<comment type="similarity">
    <text evidence="1">Belongs to the SLX1 family.</text>
</comment>
<organism>
    <name type="scientific">Monosiga brevicollis</name>
    <name type="common">Choanoflagellate</name>
    <dbReference type="NCBI Taxonomy" id="81824"/>
    <lineage>
        <taxon>Eukaryota</taxon>
        <taxon>Choanoflagellata</taxon>
        <taxon>Craspedida</taxon>
        <taxon>Salpingoecidae</taxon>
        <taxon>Monosiga</taxon>
    </lineage>
</organism>
<name>SLX1_MONBE</name>
<keyword id="KW-0227">DNA damage</keyword>
<keyword id="KW-0233">DNA recombination</keyword>
<keyword id="KW-0234">DNA repair</keyword>
<keyword id="KW-0255">Endonuclease</keyword>
<keyword id="KW-0378">Hydrolase</keyword>
<keyword id="KW-0479">Metal-binding</keyword>
<keyword id="KW-0540">Nuclease</keyword>
<keyword id="KW-0539">Nucleus</keyword>
<keyword id="KW-1185">Reference proteome</keyword>
<keyword id="KW-0862">Zinc</keyword>
<keyword id="KW-0863">Zinc-finger</keyword>
<accession>A9V196</accession>